<comment type="function">
    <text evidence="1">This protein binds to the 23S rRNA, and is important in its secondary structure. It is located near the subunit interface in the base of the L7/L12 stalk, and near the tRNA binding site of the peptidyltransferase center.</text>
</comment>
<comment type="subunit">
    <text evidence="1">Part of the 50S ribosomal subunit.</text>
</comment>
<comment type="similarity">
    <text evidence="1">Belongs to the universal ribosomal protein uL6 family.</text>
</comment>
<sequence length="180" mass="19532">MSRIGRLPIPVPKGVSVEVAPGRVKVKGPKGELEVPVSPEMRVVVEEGVVRVERPSDERRHKSLHGLTRTLIANAVKGVSEGYSKELLIKGIGYRARLVGRALELTVGFSHPVVVEPPEGITFEVPEPTRVRVSGIDKQKVGQVAANIRAIRKPSAYHEKGIYYAGEPVRLKPGKAGAKK</sequence>
<proteinExistence type="evidence at protein level"/>
<organism>
    <name type="scientific">Thermus thermophilus (strain ATCC BAA-163 / DSM 7039 / HB27)</name>
    <dbReference type="NCBI Taxonomy" id="262724"/>
    <lineage>
        <taxon>Bacteria</taxon>
        <taxon>Thermotogati</taxon>
        <taxon>Deinococcota</taxon>
        <taxon>Deinococci</taxon>
        <taxon>Thermales</taxon>
        <taxon>Thermaceae</taxon>
        <taxon>Thermus</taxon>
    </lineage>
</organism>
<name>RL6_THET2</name>
<accession>Q72I19</accession>
<evidence type="ECO:0000255" key="1">
    <source>
        <dbReference type="HAMAP-Rule" id="MF_01365"/>
    </source>
</evidence>
<evidence type="ECO:0000305" key="2"/>
<evidence type="ECO:0007829" key="3">
    <source>
        <dbReference type="PDB" id="4V63"/>
    </source>
</evidence>
<evidence type="ECO:0007829" key="4">
    <source>
        <dbReference type="PDB" id="4V67"/>
    </source>
</evidence>
<evidence type="ECO:0007829" key="5">
    <source>
        <dbReference type="PDB" id="4V84"/>
    </source>
</evidence>
<evidence type="ECO:0007829" key="6">
    <source>
        <dbReference type="PDB" id="4V9K"/>
    </source>
</evidence>
<evidence type="ECO:0007829" key="7">
    <source>
        <dbReference type="PDB" id="4V9L"/>
    </source>
</evidence>
<evidence type="ECO:0007829" key="8">
    <source>
        <dbReference type="PDB" id="4V9N"/>
    </source>
</evidence>
<evidence type="ECO:0007829" key="9">
    <source>
        <dbReference type="PDB" id="4V9Q"/>
    </source>
</evidence>
<dbReference type="EMBL" id="AE017221">
    <property type="protein sequence ID" value="AAS81655.1"/>
    <property type="molecule type" value="Genomic_DNA"/>
</dbReference>
<dbReference type="RefSeq" id="WP_011173704.1">
    <property type="nucleotide sequence ID" value="NC_005835.1"/>
</dbReference>
<dbReference type="PDB" id="4V4I">
    <property type="method" value="X-ray"/>
    <property type="resolution" value="3.71 A"/>
    <property type="chains" value="F=1-180"/>
</dbReference>
<dbReference type="PDB" id="4V4J">
    <property type="method" value="X-ray"/>
    <property type="resolution" value="3.83 A"/>
    <property type="chains" value="F=1-180"/>
</dbReference>
<dbReference type="PDB" id="4V63">
    <property type="method" value="X-ray"/>
    <property type="resolution" value="3.21 A"/>
    <property type="chains" value="BH/DH=1-180"/>
</dbReference>
<dbReference type="PDB" id="4V67">
    <property type="method" value="X-ray"/>
    <property type="resolution" value="3.00 A"/>
    <property type="chains" value="BH/DH=1-180"/>
</dbReference>
<dbReference type="PDB" id="4V7P">
    <property type="method" value="X-ray"/>
    <property type="resolution" value="3.62 A"/>
    <property type="chains" value="BG/CG=1-180"/>
</dbReference>
<dbReference type="PDB" id="4V83">
    <property type="method" value="X-ray"/>
    <property type="resolution" value="3.50 A"/>
    <property type="chains" value="BG/DG=12-170"/>
</dbReference>
<dbReference type="PDB" id="4V84">
    <property type="method" value="X-ray"/>
    <property type="resolution" value="3.40 A"/>
    <property type="chains" value="BG/DG=12-170"/>
</dbReference>
<dbReference type="PDB" id="4V9J">
    <property type="method" value="X-ray"/>
    <property type="resolution" value="3.86 A"/>
    <property type="chains" value="BH/DH=12-178"/>
</dbReference>
<dbReference type="PDB" id="4V9K">
    <property type="method" value="X-ray"/>
    <property type="resolution" value="3.50 A"/>
    <property type="chains" value="BH/DH=12-178"/>
</dbReference>
<dbReference type="PDB" id="4V9L">
    <property type="method" value="X-ray"/>
    <property type="resolution" value="3.50 A"/>
    <property type="chains" value="BH/DH=12-178"/>
</dbReference>
<dbReference type="PDB" id="4V9M">
    <property type="method" value="X-ray"/>
    <property type="resolution" value="4.00 A"/>
    <property type="chains" value="BH/DH=12-178"/>
</dbReference>
<dbReference type="PDB" id="4V9N">
    <property type="method" value="X-ray"/>
    <property type="resolution" value="3.40 A"/>
    <property type="chains" value="BH/DH=12-170"/>
</dbReference>
<dbReference type="PDB" id="4V9Q">
    <property type="method" value="X-ray"/>
    <property type="resolution" value="3.40 A"/>
    <property type="chains" value="AH/CH=12-170"/>
</dbReference>
<dbReference type="PDB" id="4W29">
    <property type="method" value="X-ray"/>
    <property type="resolution" value="3.80 A"/>
    <property type="chains" value="BH/DH=12-178"/>
</dbReference>
<dbReference type="PDB" id="4XEJ">
    <property type="method" value="X-ray"/>
    <property type="resolution" value="3.80 A"/>
    <property type="chains" value="AL06/BL06=12-170"/>
</dbReference>
<dbReference type="PDB" id="5J4D">
    <property type="method" value="X-ray"/>
    <property type="resolution" value="3.10 A"/>
    <property type="chains" value="I/NB=1-180"/>
</dbReference>
<dbReference type="PDB" id="5V8I">
    <property type="method" value="X-ray"/>
    <property type="resolution" value="3.25 A"/>
    <property type="chains" value="1H/2H=1-180"/>
</dbReference>
<dbReference type="PDB" id="6B4V">
    <property type="method" value="X-ray"/>
    <property type="resolution" value="3.40 A"/>
    <property type="chains" value="I/MB=1-180"/>
</dbReference>
<dbReference type="PDB" id="6BOH">
    <property type="method" value="X-ray"/>
    <property type="resolution" value="3.40 A"/>
    <property type="chains" value="I/NB=1-180"/>
</dbReference>
<dbReference type="PDB" id="6BOK">
    <property type="method" value="X-ray"/>
    <property type="resolution" value="3.55 A"/>
    <property type="chains" value="I/LB=1-180"/>
</dbReference>
<dbReference type="PDB" id="6N1D">
    <property type="method" value="X-ray"/>
    <property type="resolution" value="3.20 A"/>
    <property type="chains" value="AL06/BL06=1-180"/>
</dbReference>
<dbReference type="PDBsum" id="4V4I"/>
<dbReference type="PDBsum" id="4V4J"/>
<dbReference type="PDBsum" id="4V63"/>
<dbReference type="PDBsum" id="4V67"/>
<dbReference type="PDBsum" id="4V7P"/>
<dbReference type="PDBsum" id="4V83"/>
<dbReference type="PDBsum" id="4V84"/>
<dbReference type="PDBsum" id="4V9J"/>
<dbReference type="PDBsum" id="4V9K"/>
<dbReference type="PDBsum" id="4V9L"/>
<dbReference type="PDBsum" id="4V9M"/>
<dbReference type="PDBsum" id="4V9N"/>
<dbReference type="PDBsum" id="4V9Q"/>
<dbReference type="PDBsum" id="4W29"/>
<dbReference type="PDBsum" id="4XEJ"/>
<dbReference type="PDBsum" id="5J4D"/>
<dbReference type="PDBsum" id="5V8I"/>
<dbReference type="PDBsum" id="6B4V"/>
<dbReference type="PDBsum" id="6BOH"/>
<dbReference type="PDBsum" id="6BOK"/>
<dbReference type="PDBsum" id="6N1D"/>
<dbReference type="SMR" id="Q72I19"/>
<dbReference type="IntAct" id="Q72I19">
    <property type="interactions" value="4"/>
</dbReference>
<dbReference type="GeneID" id="3169807"/>
<dbReference type="KEGG" id="tth:TT_C1313"/>
<dbReference type="eggNOG" id="COG0097">
    <property type="taxonomic scope" value="Bacteria"/>
</dbReference>
<dbReference type="HOGENOM" id="CLU_065464_1_2_0"/>
<dbReference type="OrthoDB" id="9805007at2"/>
<dbReference type="Proteomes" id="UP000000592">
    <property type="component" value="Chromosome"/>
</dbReference>
<dbReference type="GO" id="GO:0022625">
    <property type="term" value="C:cytosolic large ribosomal subunit"/>
    <property type="evidence" value="ECO:0007669"/>
    <property type="project" value="TreeGrafter"/>
</dbReference>
<dbReference type="GO" id="GO:0019843">
    <property type="term" value="F:rRNA binding"/>
    <property type="evidence" value="ECO:0007669"/>
    <property type="project" value="UniProtKB-UniRule"/>
</dbReference>
<dbReference type="GO" id="GO:0003735">
    <property type="term" value="F:structural constituent of ribosome"/>
    <property type="evidence" value="ECO:0007669"/>
    <property type="project" value="InterPro"/>
</dbReference>
<dbReference type="GO" id="GO:0002181">
    <property type="term" value="P:cytoplasmic translation"/>
    <property type="evidence" value="ECO:0007669"/>
    <property type="project" value="TreeGrafter"/>
</dbReference>
<dbReference type="FunFam" id="3.90.930.12:FF:000001">
    <property type="entry name" value="50S ribosomal protein L6"/>
    <property type="match status" value="1"/>
</dbReference>
<dbReference type="FunFam" id="3.90.930.12:FF:000002">
    <property type="entry name" value="50S ribosomal protein L6"/>
    <property type="match status" value="1"/>
</dbReference>
<dbReference type="Gene3D" id="3.90.930.12">
    <property type="entry name" value="Ribosomal protein L6, alpha-beta domain"/>
    <property type="match status" value="2"/>
</dbReference>
<dbReference type="HAMAP" id="MF_01365_B">
    <property type="entry name" value="Ribosomal_uL6_B"/>
    <property type="match status" value="1"/>
</dbReference>
<dbReference type="InterPro" id="IPR000702">
    <property type="entry name" value="Ribosomal_uL6-like"/>
</dbReference>
<dbReference type="InterPro" id="IPR036789">
    <property type="entry name" value="Ribosomal_uL6-like_a/b-dom_sf"/>
</dbReference>
<dbReference type="InterPro" id="IPR020040">
    <property type="entry name" value="Ribosomal_uL6_a/b-dom"/>
</dbReference>
<dbReference type="InterPro" id="IPR019906">
    <property type="entry name" value="Ribosomal_uL6_bac-type"/>
</dbReference>
<dbReference type="NCBIfam" id="TIGR03654">
    <property type="entry name" value="L6_bact"/>
    <property type="match status" value="1"/>
</dbReference>
<dbReference type="PANTHER" id="PTHR11655">
    <property type="entry name" value="60S/50S RIBOSOMAL PROTEIN L6/L9"/>
    <property type="match status" value="1"/>
</dbReference>
<dbReference type="PANTHER" id="PTHR11655:SF14">
    <property type="entry name" value="LARGE RIBOSOMAL SUBUNIT PROTEIN UL6M"/>
    <property type="match status" value="1"/>
</dbReference>
<dbReference type="Pfam" id="PF00347">
    <property type="entry name" value="Ribosomal_L6"/>
    <property type="match status" value="2"/>
</dbReference>
<dbReference type="PIRSF" id="PIRSF002162">
    <property type="entry name" value="Ribosomal_L6"/>
    <property type="match status" value="1"/>
</dbReference>
<dbReference type="PRINTS" id="PR00059">
    <property type="entry name" value="RIBOSOMALL6"/>
</dbReference>
<dbReference type="SUPFAM" id="SSF56053">
    <property type="entry name" value="Ribosomal protein L6"/>
    <property type="match status" value="2"/>
</dbReference>
<protein>
    <recommendedName>
        <fullName evidence="1">Large ribosomal subunit protein uL6</fullName>
    </recommendedName>
    <alternativeName>
        <fullName evidence="2">50S ribosomal protein L6</fullName>
    </alternativeName>
</protein>
<reference key="1">
    <citation type="journal article" date="2004" name="Nat. Biotechnol.">
        <title>The genome sequence of the extreme thermophile Thermus thermophilus.</title>
        <authorList>
            <person name="Henne A."/>
            <person name="Brueggemann H."/>
            <person name="Raasch C."/>
            <person name="Wiezer A."/>
            <person name="Hartsch T."/>
            <person name="Liesegang H."/>
            <person name="Johann A."/>
            <person name="Lienard T."/>
            <person name="Gohl O."/>
            <person name="Martinez-Arias R."/>
            <person name="Jacobi C."/>
            <person name="Starkuviene V."/>
            <person name="Schlenczeck S."/>
            <person name="Dencker S."/>
            <person name="Huber R."/>
            <person name="Klenk H.-P."/>
            <person name="Kramer W."/>
            <person name="Merkl R."/>
            <person name="Gottschalk G."/>
            <person name="Fritz H.-J."/>
        </authorList>
    </citation>
    <scope>NUCLEOTIDE SEQUENCE [LARGE SCALE GENOMIC DNA]</scope>
    <source>
        <strain>ATCC BAA-163 / DSM 7039 / HB27</strain>
    </source>
</reference>
<feature type="chain" id="PRO_0000260969" description="Large ribosomal subunit protein uL6">
    <location>
        <begin position="1"/>
        <end position="180"/>
    </location>
</feature>
<feature type="strand" evidence="3">
    <location>
        <begin position="16"/>
        <end position="19"/>
    </location>
</feature>
<feature type="strand" evidence="7">
    <location>
        <begin position="21"/>
        <end position="23"/>
    </location>
</feature>
<feature type="strand" evidence="4">
    <location>
        <begin position="25"/>
        <end position="27"/>
    </location>
</feature>
<feature type="strand" evidence="4">
    <location>
        <begin position="32"/>
        <end position="34"/>
    </location>
</feature>
<feature type="strand" evidence="6">
    <location>
        <begin position="39"/>
        <end position="41"/>
    </location>
</feature>
<feature type="strand" evidence="3">
    <location>
        <begin position="42"/>
        <end position="44"/>
    </location>
</feature>
<feature type="strand" evidence="8">
    <location>
        <begin position="47"/>
        <end position="50"/>
    </location>
</feature>
<feature type="strand" evidence="3">
    <location>
        <begin position="51"/>
        <end position="53"/>
    </location>
</feature>
<feature type="strand" evidence="9">
    <location>
        <begin position="55"/>
        <end position="57"/>
    </location>
</feature>
<feature type="helix" evidence="4">
    <location>
        <begin position="59"/>
        <end position="80"/>
    </location>
</feature>
<feature type="strand" evidence="3">
    <location>
        <begin position="83"/>
        <end position="85"/>
    </location>
</feature>
<feature type="strand" evidence="4">
    <location>
        <begin position="88"/>
        <end position="93"/>
    </location>
</feature>
<feature type="strand" evidence="4">
    <location>
        <begin position="95"/>
        <end position="99"/>
    </location>
</feature>
<feature type="strand" evidence="4">
    <location>
        <begin position="102"/>
        <end position="111"/>
    </location>
</feature>
<feature type="strand" evidence="4">
    <location>
        <begin position="113"/>
        <end position="115"/>
    </location>
</feature>
<feature type="strand" evidence="4">
    <location>
        <begin position="121"/>
        <end position="127"/>
    </location>
</feature>
<feature type="strand" evidence="4">
    <location>
        <begin position="130"/>
        <end position="136"/>
    </location>
</feature>
<feature type="helix" evidence="4">
    <location>
        <begin position="138"/>
        <end position="151"/>
    </location>
</feature>
<feature type="strand" evidence="5">
    <location>
        <begin position="156"/>
        <end position="159"/>
    </location>
</feature>
<feature type="strand" evidence="4">
    <location>
        <begin position="161"/>
        <end position="163"/>
    </location>
</feature>
<keyword id="KW-0002">3D-structure</keyword>
<keyword id="KW-0687">Ribonucleoprotein</keyword>
<keyword id="KW-0689">Ribosomal protein</keyword>
<keyword id="KW-0694">RNA-binding</keyword>
<keyword id="KW-0699">rRNA-binding</keyword>
<gene>
    <name evidence="1" type="primary">rplF</name>
    <name type="ordered locus">TT_C1313</name>
</gene>